<evidence type="ECO:0000250" key="1">
    <source>
        <dbReference type="UniProtKB" id="Q80SX5"/>
    </source>
</evidence>
<evidence type="ECO:0000250" key="2">
    <source>
        <dbReference type="UniProtKB" id="Q80VM9"/>
    </source>
</evidence>
<evidence type="ECO:0000255" key="3"/>
<evidence type="ECO:0000256" key="4">
    <source>
        <dbReference type="SAM" id="MobiDB-lite"/>
    </source>
</evidence>
<evidence type="ECO:0000269" key="5">
    <source>
    </source>
</evidence>
<evidence type="ECO:0000303" key="6">
    <source>
    </source>
</evidence>
<evidence type="ECO:0000305" key="7"/>
<evidence type="ECO:0000312" key="8">
    <source>
        <dbReference type="HGNC" id="HGNC:19657"/>
    </source>
</evidence>
<keyword id="KW-1003">Cell membrane</keyword>
<keyword id="KW-0375">Hydrogen ion transport</keyword>
<keyword id="KW-0407">Ion channel</keyword>
<keyword id="KW-0406">Ion transport</keyword>
<keyword id="KW-0472">Membrane</keyword>
<keyword id="KW-1267">Proteomics identification</keyword>
<keyword id="KW-1185">Reference proteome</keyword>
<keyword id="KW-0812">Transmembrane</keyword>
<keyword id="KW-1133">Transmembrane helix</keyword>
<keyword id="KW-0813">Transport</keyword>
<organism>
    <name type="scientific">Homo sapiens</name>
    <name type="common">Human</name>
    <dbReference type="NCBI Taxonomy" id="9606"/>
    <lineage>
        <taxon>Eukaryota</taxon>
        <taxon>Metazoa</taxon>
        <taxon>Chordata</taxon>
        <taxon>Craniata</taxon>
        <taxon>Vertebrata</taxon>
        <taxon>Euteleostomi</taxon>
        <taxon>Mammalia</taxon>
        <taxon>Eutheria</taxon>
        <taxon>Euarchontoglires</taxon>
        <taxon>Primates</taxon>
        <taxon>Haplorrhini</taxon>
        <taxon>Catarrhini</taxon>
        <taxon>Hominidae</taxon>
        <taxon>Homo</taxon>
    </lineage>
</organism>
<accession>Q7RTS6</accession>
<name>OTOP2_HUMAN</name>
<sequence>MSEELAQGPKESPPAPRAGPREVWKKGGRLLSVLLAVNVLLLACTLISGGAFNKVAVYDTDVFALLTAMMLLATLWILFYLLRTVRCPCAVPYRDAHAGPIWLRGGLVLFGICTLIMDVFKTGYYSSFFECQSAIKILHPLIQAVFVIIQTYFLWVSAKDCVHVHLDLTWCGLMFTLTTNLAIWMAAVVDESVHQSHSYSSSHSNASHARLISDQHADNPVGGDSCLCSTAVCQIFQQGYFYLYPFNIEYSLFASTMLYVMWKNVGRFLASTPGHSHTPTPVSLFRETFFAGPVLGLLLFVVGLAVFIIYEVQVSGDGSRTRQALVIYYSFNIVCLGLTTLVSLSGSIIYRFDRRAMDHHKNPTRTLDVALLMGAALGQYAISYYSIVAVVAGTPQDLLAGLNLTHALLMIAQHTFQNMFIIESLHRGPPGAEPHSTHPKEPCQDLTFTNLDALHTLSACPPNPGLVSPSPSDQREAVAIVSTPRSQWRRQCLKDISLFLLLCNVILWIMPAFGARPHFSNTVEVDFYGYSLWAVIVNICLPFGIFYRMHAVSSLLEVYVLS</sequence>
<dbReference type="EMBL" id="AC068874">
    <property type="status" value="NOT_ANNOTATED_CDS"/>
    <property type="molecule type" value="Genomic_DNA"/>
</dbReference>
<dbReference type="EMBL" id="AC087651">
    <property type="status" value="NOT_ANNOTATED_CDS"/>
    <property type="molecule type" value="Genomic_DNA"/>
</dbReference>
<dbReference type="EMBL" id="BK000567">
    <property type="protein sequence ID" value="DAA00895.1"/>
    <property type="molecule type" value="mRNA"/>
</dbReference>
<dbReference type="CCDS" id="CCDS11708.1"/>
<dbReference type="RefSeq" id="NP_835454.1">
    <property type="nucleotide sequence ID" value="NM_178160.3"/>
</dbReference>
<dbReference type="RefSeq" id="XP_011523781.1">
    <property type="nucleotide sequence ID" value="XM_011525479.1"/>
</dbReference>
<dbReference type="SMR" id="Q7RTS6"/>
<dbReference type="BioGRID" id="124972">
    <property type="interactions" value="7"/>
</dbReference>
<dbReference type="FunCoup" id="Q7RTS6">
    <property type="interactions" value="372"/>
</dbReference>
<dbReference type="IntAct" id="Q7RTS6">
    <property type="interactions" value="6"/>
</dbReference>
<dbReference type="MINT" id="Q7RTS6"/>
<dbReference type="STRING" id="9606.ENSP00000332528"/>
<dbReference type="TCDB" id="1.A.110.1.3">
    <property type="family name" value="the channel-forming otopetrin (otop) family"/>
</dbReference>
<dbReference type="iPTMnet" id="Q7RTS6"/>
<dbReference type="PhosphoSitePlus" id="Q7RTS6"/>
<dbReference type="BioMuta" id="OTOP2"/>
<dbReference type="DMDM" id="296439281"/>
<dbReference type="jPOST" id="Q7RTS6"/>
<dbReference type="MassIVE" id="Q7RTS6"/>
<dbReference type="PaxDb" id="9606-ENSP00000332528"/>
<dbReference type="PeptideAtlas" id="Q7RTS6"/>
<dbReference type="Antibodypedia" id="32060">
    <property type="antibodies" value="100 antibodies from 16 providers"/>
</dbReference>
<dbReference type="DNASU" id="92736"/>
<dbReference type="Ensembl" id="ENST00000331427.9">
    <property type="protein sequence ID" value="ENSP00000332528.4"/>
    <property type="gene ID" value="ENSG00000183034.13"/>
</dbReference>
<dbReference type="GeneID" id="92736"/>
<dbReference type="KEGG" id="hsa:92736"/>
<dbReference type="MANE-Select" id="ENST00000331427.9">
    <property type="protein sequence ID" value="ENSP00000332528.4"/>
    <property type="RefSeq nucleotide sequence ID" value="NM_178160.3"/>
    <property type="RefSeq protein sequence ID" value="NP_835454.1"/>
</dbReference>
<dbReference type="UCSC" id="uc010wrp.2">
    <property type="organism name" value="human"/>
</dbReference>
<dbReference type="AGR" id="HGNC:19657"/>
<dbReference type="CTD" id="92736"/>
<dbReference type="GeneCards" id="OTOP2"/>
<dbReference type="HGNC" id="HGNC:19657">
    <property type="gene designation" value="OTOP2"/>
</dbReference>
<dbReference type="HPA" id="ENSG00000183034">
    <property type="expression patterns" value="Tissue enriched (intestine)"/>
</dbReference>
<dbReference type="MalaCards" id="OTOP2"/>
<dbReference type="MIM" id="607827">
    <property type="type" value="gene"/>
</dbReference>
<dbReference type="neXtProt" id="NX_Q7RTS6"/>
<dbReference type="OpenTargets" id="ENSG00000183034"/>
<dbReference type="PharmGKB" id="PA134930692"/>
<dbReference type="VEuPathDB" id="HostDB:ENSG00000183034"/>
<dbReference type="eggNOG" id="KOG4740">
    <property type="taxonomic scope" value="Eukaryota"/>
</dbReference>
<dbReference type="GeneTree" id="ENSGT00940000156691"/>
<dbReference type="HOGENOM" id="CLU_032913_0_0_1"/>
<dbReference type="InParanoid" id="Q7RTS6"/>
<dbReference type="OMA" id="VHLDLTW"/>
<dbReference type="OrthoDB" id="6429739at2759"/>
<dbReference type="PAN-GO" id="Q7RTS6">
    <property type="GO annotations" value="3 GO annotations based on evolutionary models"/>
</dbReference>
<dbReference type="PhylomeDB" id="Q7RTS6"/>
<dbReference type="TreeFam" id="TF313428"/>
<dbReference type="PathwayCommons" id="Q7RTS6"/>
<dbReference type="SignaLink" id="Q7RTS6"/>
<dbReference type="BioGRID-ORCS" id="92736">
    <property type="hits" value="15 hits in 1143 CRISPR screens"/>
</dbReference>
<dbReference type="GenomeRNAi" id="92736"/>
<dbReference type="Pharos" id="Q7RTS6">
    <property type="development level" value="Tbio"/>
</dbReference>
<dbReference type="PRO" id="PR:Q7RTS6"/>
<dbReference type="Proteomes" id="UP000005640">
    <property type="component" value="Chromosome 17"/>
</dbReference>
<dbReference type="RNAct" id="Q7RTS6">
    <property type="molecule type" value="protein"/>
</dbReference>
<dbReference type="Bgee" id="ENSG00000183034">
    <property type="expression patterns" value="Expressed in mucosa of transverse colon and 24 other cell types or tissues"/>
</dbReference>
<dbReference type="ExpressionAtlas" id="Q7RTS6">
    <property type="expression patterns" value="baseline and differential"/>
</dbReference>
<dbReference type="GO" id="GO:0016020">
    <property type="term" value="C:membrane"/>
    <property type="evidence" value="ECO:0000318"/>
    <property type="project" value="GO_Central"/>
</dbReference>
<dbReference type="GO" id="GO:0005886">
    <property type="term" value="C:plasma membrane"/>
    <property type="evidence" value="ECO:0007669"/>
    <property type="project" value="UniProtKB-SubCell"/>
</dbReference>
<dbReference type="GO" id="GO:0015252">
    <property type="term" value="F:proton channel activity"/>
    <property type="evidence" value="ECO:0000250"/>
    <property type="project" value="UniProtKB"/>
</dbReference>
<dbReference type="GO" id="GO:1902600">
    <property type="term" value="P:proton transmembrane transport"/>
    <property type="evidence" value="ECO:0000250"/>
    <property type="project" value="UniProtKB"/>
</dbReference>
<dbReference type="InterPro" id="IPR004878">
    <property type="entry name" value="Otopetrin"/>
</dbReference>
<dbReference type="PANTHER" id="PTHR21522">
    <property type="entry name" value="PROTON CHANNEL OTOP"/>
    <property type="match status" value="1"/>
</dbReference>
<dbReference type="PANTHER" id="PTHR21522:SF35">
    <property type="entry name" value="PROTON CHANNEL OTOP2"/>
    <property type="match status" value="1"/>
</dbReference>
<dbReference type="Pfam" id="PF03189">
    <property type="entry name" value="Otopetrin"/>
    <property type="match status" value="2"/>
</dbReference>
<proteinExistence type="evidence at protein level"/>
<protein>
    <recommendedName>
        <fullName evidence="7">Proton channel OTOP2</fullName>
    </recommendedName>
    <alternativeName>
        <fullName evidence="6">Otopetrin-2</fullName>
    </alternativeName>
</protein>
<comment type="function">
    <text evidence="1">Proton-selective ion channel open at neutral pH. Actives at neutral and alkaline extracellular pH, likely participates in some alkali-related physiological activities.</text>
</comment>
<comment type="catalytic activity">
    <reaction evidence="1">
        <text>H(+)(in) = H(+)(out)</text>
        <dbReference type="Rhea" id="RHEA:34979"/>
        <dbReference type="ChEBI" id="CHEBI:15378"/>
    </reaction>
</comment>
<comment type="activity regulation">
    <text evidence="1">Actives at neutral and alkaline extracellular pH, acid extracellular pH appears to inhibit the channel (By similarity). Insensitive to activation by Zn(2+) (By similarity).</text>
</comment>
<comment type="interaction">
    <interactant intactId="EBI-7642372">
        <id>Q7RTS6</id>
    </interactant>
    <interactant intactId="EBI-7797864">
        <id>P11912</id>
        <label>CD79A</label>
    </interactant>
    <organismsDiffer>false</organismsDiffer>
    <experiments>3</experiments>
</comment>
<comment type="interaction">
    <interactant intactId="EBI-7642372">
        <id>Q7RTS6</id>
    </interactant>
    <interactant intactId="EBI-743099">
        <id>Q969F0</id>
        <label>FATE1</label>
    </interactant>
    <organismsDiffer>false</organismsDiffer>
    <experiments>4</experiments>
</comment>
<comment type="interaction">
    <interactant intactId="EBI-7642372">
        <id>Q7RTS6</id>
    </interactant>
    <interactant intactId="EBI-17458373">
        <id>P48165</id>
        <label>GJA8</label>
    </interactant>
    <organismsDiffer>false</organismsDiffer>
    <experiments>3</experiments>
</comment>
<comment type="interaction">
    <interactant intactId="EBI-7642372">
        <id>Q7RTS6</id>
    </interactant>
    <interactant intactId="EBI-3867271">
        <id>Q9NQG1</id>
        <label>MANBAL</label>
    </interactant>
    <organismsDiffer>false</organismsDiffer>
    <experiments>3</experiments>
</comment>
<comment type="interaction">
    <interactant intactId="EBI-7642372">
        <id>Q7RTS6</id>
    </interactant>
    <interactant intactId="EBI-10982110">
        <id>Q96Q45-2</id>
        <label>TMEM237</label>
    </interactant>
    <organismsDiffer>false</organismsDiffer>
    <experiments>3</experiments>
</comment>
<comment type="subcellular location">
    <subcellularLocation>
        <location evidence="2">Cell membrane</location>
        <topology evidence="3">Multi-pass membrane protein</topology>
    </subcellularLocation>
</comment>
<comment type="similarity">
    <text evidence="7">Belongs to the otopetrin family.</text>
</comment>
<reference key="1">
    <citation type="journal article" date="2006" name="Nature">
        <title>DNA sequence of human chromosome 17 and analysis of rearrangement in the human lineage.</title>
        <authorList>
            <person name="Zody M.C."/>
            <person name="Garber M."/>
            <person name="Adams D.J."/>
            <person name="Sharpe T."/>
            <person name="Harrow J."/>
            <person name="Lupski J.R."/>
            <person name="Nicholson C."/>
            <person name="Searle S.M."/>
            <person name="Wilming L."/>
            <person name="Young S.K."/>
            <person name="Abouelleil A."/>
            <person name="Allen N.R."/>
            <person name="Bi W."/>
            <person name="Bloom T."/>
            <person name="Borowsky M.L."/>
            <person name="Bugalter B.E."/>
            <person name="Butler J."/>
            <person name="Chang J.L."/>
            <person name="Chen C.-K."/>
            <person name="Cook A."/>
            <person name="Corum B."/>
            <person name="Cuomo C.A."/>
            <person name="de Jong P.J."/>
            <person name="DeCaprio D."/>
            <person name="Dewar K."/>
            <person name="FitzGerald M."/>
            <person name="Gilbert J."/>
            <person name="Gibson R."/>
            <person name="Gnerre S."/>
            <person name="Goldstein S."/>
            <person name="Grafham D.V."/>
            <person name="Grocock R."/>
            <person name="Hafez N."/>
            <person name="Hagopian D.S."/>
            <person name="Hart E."/>
            <person name="Norman C.H."/>
            <person name="Humphray S."/>
            <person name="Jaffe D.B."/>
            <person name="Jones M."/>
            <person name="Kamal M."/>
            <person name="Khodiyar V.K."/>
            <person name="LaButti K."/>
            <person name="Laird G."/>
            <person name="Lehoczky J."/>
            <person name="Liu X."/>
            <person name="Lokyitsang T."/>
            <person name="Loveland J."/>
            <person name="Lui A."/>
            <person name="Macdonald P."/>
            <person name="Major J.E."/>
            <person name="Matthews L."/>
            <person name="Mauceli E."/>
            <person name="McCarroll S.A."/>
            <person name="Mihalev A.H."/>
            <person name="Mudge J."/>
            <person name="Nguyen C."/>
            <person name="Nicol R."/>
            <person name="O'Leary S.B."/>
            <person name="Osoegawa K."/>
            <person name="Schwartz D.C."/>
            <person name="Shaw-Smith C."/>
            <person name="Stankiewicz P."/>
            <person name="Steward C."/>
            <person name="Swarbreck D."/>
            <person name="Venkataraman V."/>
            <person name="Whittaker C.A."/>
            <person name="Yang X."/>
            <person name="Zimmer A.R."/>
            <person name="Bradley A."/>
            <person name="Hubbard T."/>
            <person name="Birren B.W."/>
            <person name="Rogers J."/>
            <person name="Lander E.S."/>
            <person name="Nusbaum C."/>
        </authorList>
    </citation>
    <scope>NUCLEOTIDE SEQUENCE [LARGE SCALE GENOMIC DNA]</scope>
</reference>
<reference key="2">
    <citation type="journal article" date="2003" name="Hum. Mol. Genet.">
        <title>Non-syndromic vestibular disorder with otoconial agenesis in tilted/mergulhador mice caused by mutations in otopetrin 1.</title>
        <authorList>
            <person name="Hurle B."/>
            <person name="Ignatova E."/>
            <person name="Massironi S.M."/>
            <person name="Mashimo T."/>
            <person name="Rios X."/>
            <person name="Thalmann I."/>
            <person name="Thalmann R."/>
            <person name="Ornitz D.M."/>
        </authorList>
    </citation>
    <scope>IDENTIFICATION</scope>
</reference>
<reference key="3">
    <citation type="journal article" date="2006" name="Science">
        <title>The consensus coding sequences of human breast and colorectal cancers.</title>
        <authorList>
            <person name="Sjoeblom T."/>
            <person name="Jones S."/>
            <person name="Wood L.D."/>
            <person name="Parsons D.W."/>
            <person name="Lin J."/>
            <person name="Barber T.D."/>
            <person name="Mandelker D."/>
            <person name="Leary R.J."/>
            <person name="Ptak J."/>
            <person name="Silliman N."/>
            <person name="Szabo S."/>
            <person name="Buckhaults P."/>
            <person name="Farrell C."/>
            <person name="Meeh P."/>
            <person name="Markowitz S.D."/>
            <person name="Willis J."/>
            <person name="Dawson D."/>
            <person name="Willson J.K.V."/>
            <person name="Gazdar A.F."/>
            <person name="Hartigan J."/>
            <person name="Wu L."/>
            <person name="Liu C."/>
            <person name="Parmigiani G."/>
            <person name="Park B.H."/>
            <person name="Bachman K.E."/>
            <person name="Papadopoulos N."/>
            <person name="Vogelstein B."/>
            <person name="Kinzler K.W."/>
            <person name="Velculescu V.E."/>
        </authorList>
    </citation>
    <scope>VARIANT [LARGE SCALE ANALYSIS] VAL-392</scope>
</reference>
<gene>
    <name evidence="6 8" type="primary">OTOP2</name>
</gene>
<feature type="chain" id="PRO_0000313820" description="Proton channel OTOP2">
    <location>
        <begin position="1"/>
        <end position="562"/>
    </location>
</feature>
<feature type="transmembrane region" description="Helical" evidence="3">
    <location>
        <begin position="30"/>
        <end position="50"/>
    </location>
</feature>
<feature type="transmembrane region" description="Helical" evidence="3">
    <location>
        <begin position="62"/>
        <end position="82"/>
    </location>
</feature>
<feature type="transmembrane region" description="Helical" evidence="3">
    <location>
        <begin position="100"/>
        <end position="120"/>
    </location>
</feature>
<feature type="transmembrane region" description="Helical" evidence="3">
    <location>
        <begin position="137"/>
        <end position="157"/>
    </location>
</feature>
<feature type="transmembrane region" description="Helical" evidence="3">
    <location>
        <begin position="169"/>
        <end position="189"/>
    </location>
</feature>
<feature type="transmembrane region" description="Helical" evidence="3">
    <location>
        <begin position="241"/>
        <end position="261"/>
    </location>
</feature>
<feature type="transmembrane region" description="Helical" evidence="3">
    <location>
        <begin position="289"/>
        <end position="309"/>
    </location>
</feature>
<feature type="transmembrane region" description="Helical" evidence="3">
    <location>
        <begin position="324"/>
        <end position="344"/>
    </location>
</feature>
<feature type="transmembrane region" description="Helical" evidence="3">
    <location>
        <begin position="371"/>
        <end position="391"/>
    </location>
</feature>
<feature type="transmembrane region" description="Helical" evidence="3">
    <location>
        <begin position="402"/>
        <end position="422"/>
    </location>
</feature>
<feature type="transmembrane region" description="Helical" evidence="3">
    <location>
        <begin position="495"/>
        <end position="515"/>
    </location>
</feature>
<feature type="transmembrane region" description="Helical" evidence="3">
    <location>
        <begin position="527"/>
        <end position="547"/>
    </location>
</feature>
<feature type="region of interest" description="Disordered" evidence="4">
    <location>
        <begin position="1"/>
        <end position="20"/>
    </location>
</feature>
<feature type="sequence variant" id="VAR_037760" description="In a colorectal cancer sample; somatic mutation; dbSNP:rs148548570." evidence="5">
    <original>A</original>
    <variation>V</variation>
    <location>
        <position position="392"/>
    </location>
</feature>
<feature type="sequence variant" id="VAR_037761" description="In dbSNP:rs6501741.">
    <original>G</original>
    <variation>W</variation>
    <location>
        <position position="465"/>
    </location>
</feature>